<dbReference type="EC" id="7.2.1.-" evidence="1 4"/>
<dbReference type="EMBL" id="AE010299">
    <property type="protein sequence ID" value="AAM04103.1"/>
    <property type="molecule type" value="Genomic_DNA"/>
</dbReference>
<dbReference type="RefSeq" id="WP_011020708.1">
    <property type="nucleotide sequence ID" value="NC_003552.1"/>
</dbReference>
<dbReference type="SMR" id="Q8TSY2"/>
<dbReference type="STRING" id="188937.MA_0661"/>
<dbReference type="TCDB" id="3.D.6.1.3">
    <property type="family name" value="the ion (h(+) or na(+))-translocating nadh:ferredoxin oxidoreductase (nfo or rnf) family"/>
</dbReference>
<dbReference type="EnsemblBacteria" id="AAM04103">
    <property type="protein sequence ID" value="AAM04103"/>
    <property type="gene ID" value="MA_0661"/>
</dbReference>
<dbReference type="GeneID" id="1472553"/>
<dbReference type="KEGG" id="mac:MA_0661"/>
<dbReference type="HOGENOM" id="CLU_077882_2_2_2"/>
<dbReference type="InParanoid" id="Q8TSY2"/>
<dbReference type="OrthoDB" id="125674at2157"/>
<dbReference type="PhylomeDB" id="Q8TSY2"/>
<dbReference type="BRENDA" id="7.2.1.2">
    <property type="organism ID" value="7224"/>
</dbReference>
<dbReference type="Proteomes" id="UP000002487">
    <property type="component" value="Chromosome"/>
</dbReference>
<dbReference type="GO" id="GO:1990204">
    <property type="term" value="C:oxidoreductase complex"/>
    <property type="evidence" value="ECO:0000318"/>
    <property type="project" value="GO_Central"/>
</dbReference>
<dbReference type="GO" id="GO:0005886">
    <property type="term" value="C:plasma membrane"/>
    <property type="evidence" value="ECO:0000318"/>
    <property type="project" value="GO_Central"/>
</dbReference>
<dbReference type="GO" id="GO:0009055">
    <property type="term" value="F:electron transfer activity"/>
    <property type="evidence" value="ECO:0007669"/>
    <property type="project" value="InterPro"/>
</dbReference>
<dbReference type="GO" id="GO:0010181">
    <property type="term" value="F:FMN binding"/>
    <property type="evidence" value="ECO:0007669"/>
    <property type="project" value="InterPro"/>
</dbReference>
<dbReference type="GO" id="GO:0016651">
    <property type="term" value="F:oxidoreductase activity, acting on NAD(P)H"/>
    <property type="evidence" value="ECO:0000318"/>
    <property type="project" value="GO_Central"/>
</dbReference>
<dbReference type="GO" id="GO:0022900">
    <property type="term" value="P:electron transport chain"/>
    <property type="evidence" value="ECO:0007669"/>
    <property type="project" value="UniProtKB-UniRule"/>
</dbReference>
<dbReference type="Gene3D" id="3.90.1010.20">
    <property type="match status" value="1"/>
</dbReference>
<dbReference type="HAMAP" id="MF_00479">
    <property type="entry name" value="RsxG_RnfG"/>
    <property type="match status" value="1"/>
</dbReference>
<dbReference type="InterPro" id="IPR007329">
    <property type="entry name" value="FMN-bd"/>
</dbReference>
<dbReference type="InterPro" id="IPR010209">
    <property type="entry name" value="Ion_transpt_RnfG/RsxG"/>
</dbReference>
<dbReference type="InterPro" id="IPR049687">
    <property type="entry name" value="Ion_transpt_RnfG_Methano"/>
</dbReference>
<dbReference type="NCBIfam" id="TIGR01947">
    <property type="entry name" value="rnfG"/>
    <property type="match status" value="1"/>
</dbReference>
<dbReference type="NCBIfam" id="NF041840">
    <property type="entry name" value="rnfG_Methano"/>
    <property type="match status" value="1"/>
</dbReference>
<dbReference type="PANTHER" id="PTHR36118">
    <property type="entry name" value="ION-TRANSLOCATING OXIDOREDUCTASE COMPLEX SUBUNIT G"/>
    <property type="match status" value="1"/>
</dbReference>
<dbReference type="PANTHER" id="PTHR36118:SF1">
    <property type="entry name" value="ION-TRANSLOCATING OXIDOREDUCTASE COMPLEX SUBUNIT G"/>
    <property type="match status" value="1"/>
</dbReference>
<dbReference type="Pfam" id="PF04205">
    <property type="entry name" value="FMN_bind"/>
    <property type="match status" value="1"/>
</dbReference>
<dbReference type="PIRSF" id="PIRSF006091">
    <property type="entry name" value="E_trnsport_RnfG"/>
    <property type="match status" value="1"/>
</dbReference>
<dbReference type="SMART" id="SM00900">
    <property type="entry name" value="FMN_bind"/>
    <property type="match status" value="1"/>
</dbReference>
<gene>
    <name evidence="1" type="primary">rnfG</name>
    <name evidence="7" type="ordered locus">MA_0661</name>
</gene>
<name>RNFG_METAC</name>
<protein>
    <recommendedName>
        <fullName evidence="1 4">Ion-translocating oxidoreductase complex subunit G</fullName>
        <ecNumber evidence="1 4">7.2.1.-</ecNumber>
    </recommendedName>
    <alternativeName>
        <fullName evidence="1 4">Rnf electron transport complex subunit G</fullName>
    </alternativeName>
</protein>
<organism>
    <name type="scientific">Methanosarcina acetivorans (strain ATCC 35395 / DSM 2834 / JCM 12185 / C2A)</name>
    <dbReference type="NCBI Taxonomy" id="188937"/>
    <lineage>
        <taxon>Archaea</taxon>
        <taxon>Methanobacteriati</taxon>
        <taxon>Methanobacteriota</taxon>
        <taxon>Stenosarchaea group</taxon>
        <taxon>Methanomicrobia</taxon>
        <taxon>Methanosarcinales</taxon>
        <taxon>Methanosarcinaceae</taxon>
        <taxon>Methanosarcina</taxon>
    </lineage>
</organism>
<evidence type="ECO:0000255" key="1">
    <source>
        <dbReference type="HAMAP-Rule" id="MF_00479"/>
    </source>
</evidence>
<evidence type="ECO:0000269" key="2">
    <source>
    </source>
</evidence>
<evidence type="ECO:0000269" key="3">
    <source>
    </source>
</evidence>
<evidence type="ECO:0000305" key="4"/>
<evidence type="ECO:0000305" key="5">
    <source>
    </source>
</evidence>
<evidence type="ECO:0000305" key="6">
    <source>
    </source>
</evidence>
<evidence type="ECO:0000312" key="7">
    <source>
        <dbReference type="EMBL" id="AAM04103.1"/>
    </source>
</evidence>
<proteinExistence type="evidence at protein level"/>
<reference key="1">
    <citation type="journal article" date="2002" name="Genome Res.">
        <title>The genome of Methanosarcina acetivorans reveals extensive metabolic and physiological diversity.</title>
        <authorList>
            <person name="Galagan J.E."/>
            <person name="Nusbaum C."/>
            <person name="Roy A."/>
            <person name="Endrizzi M.G."/>
            <person name="Macdonald P."/>
            <person name="FitzHugh W."/>
            <person name="Calvo S."/>
            <person name="Engels R."/>
            <person name="Smirnov S."/>
            <person name="Atnoor D."/>
            <person name="Brown A."/>
            <person name="Allen N."/>
            <person name="Naylor J."/>
            <person name="Stange-Thomann N."/>
            <person name="DeArellano K."/>
            <person name="Johnson R."/>
            <person name="Linton L."/>
            <person name="McEwan P."/>
            <person name="McKernan K."/>
            <person name="Talamas J."/>
            <person name="Tirrell A."/>
            <person name="Ye W."/>
            <person name="Zimmer A."/>
            <person name="Barber R.D."/>
            <person name="Cann I."/>
            <person name="Graham D.E."/>
            <person name="Grahame D.A."/>
            <person name="Guss A.M."/>
            <person name="Hedderich R."/>
            <person name="Ingram-Smith C."/>
            <person name="Kuettner H.C."/>
            <person name="Krzycki J.A."/>
            <person name="Leigh J.A."/>
            <person name="Li W."/>
            <person name="Liu J."/>
            <person name="Mukhopadhyay B."/>
            <person name="Reeve J.N."/>
            <person name="Smith K."/>
            <person name="Springer T.A."/>
            <person name="Umayam L.A."/>
            <person name="White O."/>
            <person name="White R.H."/>
            <person name="de Macario E.C."/>
            <person name="Ferry J.G."/>
            <person name="Jarrell K.F."/>
            <person name="Jing H."/>
            <person name="Macario A.J.L."/>
            <person name="Paulsen I.T."/>
            <person name="Pritchett M."/>
            <person name="Sowers K.R."/>
            <person name="Swanson R.V."/>
            <person name="Zinder S.H."/>
            <person name="Lander E."/>
            <person name="Metcalf W.W."/>
            <person name="Birren B."/>
        </authorList>
    </citation>
    <scope>NUCLEOTIDE SEQUENCE [LARGE SCALE GENOMIC DNA]</scope>
    <source>
        <strain>ATCC 35395 / DSM 2834 / JCM 12185 / C2A</strain>
    </source>
</reference>
<reference key="2">
    <citation type="journal article" date="2012" name="FEBS J.">
        <title>Electron transport during aceticlastic methanogenesis by Methanosarcina acetivorans involves a sodium-translocating Rnf complex.</title>
        <authorList>
            <person name="Schlegel K."/>
            <person name="Welte C."/>
            <person name="Deppenmeier U."/>
            <person name="Mueller V."/>
        </authorList>
    </citation>
    <scope>FUNCTION</scope>
    <scope>SUBUNIT</scope>
    <scope>DISRUPTION PHENOTYPE</scope>
    <source>
        <strain>ATCC 35395 / DSM 2834 / JCM 12185 / C2A</strain>
    </source>
</reference>
<reference key="3">
    <citation type="journal article" date="2014" name="PLoS ONE">
        <title>Characterization of the RnfB and RnfG subunits of the Rnf complex from the archaeon Methanosarcina acetivorans.</title>
        <authorList>
            <person name="Suharti S."/>
            <person name="Wang M."/>
            <person name="de Vries S."/>
            <person name="Ferry J.G."/>
        </authorList>
    </citation>
    <scope>SUBCELLULAR LOCATION</scope>
    <scope>TOPOLOGY</scope>
    <scope>PROSTHETIC GROUP AT THR-166</scope>
    <scope>MUTAGENESIS OF THR-166</scope>
</reference>
<comment type="function">
    <text evidence="2">Part of a membrane-bound complex that couples electron transfer with translocation of ions across the membrane. Catalyzes Na(+) transport, most probably coupled to electron transfer from reduced ferredoxin to methanophenazine and heterodisulfide reductase. Involved in heterodisulfide reduction during methanogenesis from acetate.</text>
</comment>
<comment type="cofactor">
    <cofactor evidence="1">
        <name>FMN</name>
        <dbReference type="ChEBI" id="CHEBI:58210"/>
    </cofactor>
</comment>
<comment type="subunit">
    <text evidence="1 5">The Rnf complex is probably composed of eight subunits, including RnfA, RnfB, RnfC, RnfD, RnfE and RnfG.</text>
</comment>
<comment type="subcellular location">
    <subcellularLocation>
        <location evidence="1 3">Cell membrane</location>
        <topology evidence="1">Single-pass membrane protein</topology>
    </subcellularLocation>
</comment>
<comment type="disruption phenotype">
    <text evidence="2">Deletion of the rnf operon abolishes growth on acetate and ferredoxin:heterodisulfide oxidoreductase-coupled Na(+) transport.</text>
</comment>
<comment type="similarity">
    <text evidence="1">Belongs to the RnfG family.</text>
</comment>
<feature type="chain" id="PRO_0000443498" description="Ion-translocating oxidoreductase complex subunit G">
    <location>
        <begin position="1"/>
        <end position="188"/>
    </location>
</feature>
<feature type="topological domain" description="Cytoplasmic" evidence="6">
    <location>
        <begin position="1"/>
        <end position="9"/>
    </location>
</feature>
<feature type="transmembrane region" description="Helical" evidence="1">
    <location>
        <begin position="10"/>
        <end position="30"/>
    </location>
</feature>
<feature type="topological domain" description="Extracellular" evidence="3">
    <location>
        <begin position="31"/>
        <end position="188"/>
    </location>
</feature>
<feature type="modified residue" description="FMN phosphoryl threonine" evidence="1 3">
    <location>
        <position position="166"/>
    </location>
</feature>
<feature type="mutagenesis site" description="Abolishes flavin binding." evidence="3">
    <original>T</original>
    <variation>G</variation>
    <location>
        <position position="166"/>
    </location>
</feature>
<keyword id="KW-1003">Cell membrane</keyword>
<keyword id="KW-0249">Electron transport</keyword>
<keyword id="KW-0285">Flavoprotein</keyword>
<keyword id="KW-0288">FMN</keyword>
<keyword id="KW-0472">Membrane</keyword>
<keyword id="KW-0597">Phosphoprotein</keyword>
<keyword id="KW-1185">Reference proteome</keyword>
<keyword id="KW-1278">Translocase</keyword>
<keyword id="KW-0812">Transmembrane</keyword>
<keyword id="KW-1133">Transmembrane helix</keyword>
<keyword id="KW-0813">Transport</keyword>
<accession>Q8TSY2</accession>
<sequence>MSDSKEITKVIVTMVVISAVAAALLALTYTPTQAQLKLLQAEQQKEAMKEILPQAADFEPVTGSEVDDDGNPVVLYYKGVDSSGNVVGYVVERNQVGAQGMIQLLAGISSDFSTITGFQVMKHSETPGLGALITTPEFQGQFVDLPVADTSLTKNGGQVDAISGATISSQAVVDALHSAVDYVSAQEG</sequence>